<keyword id="KW-0489">Methyltransferase</keyword>
<keyword id="KW-1185">Reference proteome</keyword>
<keyword id="KW-0694">RNA-binding</keyword>
<keyword id="KW-0949">S-adenosyl-L-methionine</keyword>
<keyword id="KW-0808">Transferase</keyword>
<keyword id="KW-0819">tRNA processing</keyword>
<keyword id="KW-0820">tRNA-binding</keyword>
<accession>O29443</accession>
<name>TRM1_ARCFU</name>
<organism>
    <name type="scientific">Archaeoglobus fulgidus (strain ATCC 49558 / DSM 4304 / JCM 9628 / NBRC 100126 / VC-16)</name>
    <dbReference type="NCBI Taxonomy" id="224325"/>
    <lineage>
        <taxon>Archaea</taxon>
        <taxon>Methanobacteriati</taxon>
        <taxon>Methanobacteriota</taxon>
        <taxon>Archaeoglobi</taxon>
        <taxon>Archaeoglobales</taxon>
        <taxon>Archaeoglobaceae</taxon>
        <taxon>Archaeoglobus</taxon>
    </lineage>
</organism>
<dbReference type="EC" id="2.1.1.216" evidence="1"/>
<dbReference type="EMBL" id="AE000782">
    <property type="protein sequence ID" value="AAB90427.1"/>
    <property type="molecule type" value="Genomic_DNA"/>
</dbReference>
<dbReference type="PIR" id="G69351">
    <property type="entry name" value="G69351"/>
</dbReference>
<dbReference type="RefSeq" id="WP_010878318.1">
    <property type="nucleotide sequence ID" value="NC_000917.1"/>
</dbReference>
<dbReference type="SMR" id="O29443"/>
<dbReference type="STRING" id="224325.AF_0815"/>
<dbReference type="PaxDb" id="224325-AF_0815"/>
<dbReference type="EnsemblBacteria" id="AAB90427">
    <property type="protein sequence ID" value="AAB90427"/>
    <property type="gene ID" value="AF_0815"/>
</dbReference>
<dbReference type="GeneID" id="1484034"/>
<dbReference type="KEGG" id="afu:AF_0815"/>
<dbReference type="eggNOG" id="arCOG01219">
    <property type="taxonomic scope" value="Archaea"/>
</dbReference>
<dbReference type="HOGENOM" id="CLU_010862_5_1_2"/>
<dbReference type="OrthoDB" id="372177at2157"/>
<dbReference type="PhylomeDB" id="O29443"/>
<dbReference type="Proteomes" id="UP000002199">
    <property type="component" value="Chromosome"/>
</dbReference>
<dbReference type="GO" id="GO:0160104">
    <property type="term" value="F:tRNA (guanine(26)-N2)-dimethyltransferase activity"/>
    <property type="evidence" value="ECO:0007669"/>
    <property type="project" value="UniProtKB-UniRule"/>
</dbReference>
<dbReference type="GO" id="GO:0000049">
    <property type="term" value="F:tRNA binding"/>
    <property type="evidence" value="ECO:0007669"/>
    <property type="project" value="UniProtKB-KW"/>
</dbReference>
<dbReference type="GO" id="GO:0002940">
    <property type="term" value="P:tRNA N2-guanine methylation"/>
    <property type="evidence" value="ECO:0007669"/>
    <property type="project" value="TreeGrafter"/>
</dbReference>
<dbReference type="Gene3D" id="3.30.56.70">
    <property type="entry name" value="N2,N2-dimethylguanosine tRNA methyltransferase, C-terminal domain"/>
    <property type="match status" value="1"/>
</dbReference>
<dbReference type="Gene3D" id="3.40.50.150">
    <property type="entry name" value="Vaccinia Virus protein VP39"/>
    <property type="match status" value="1"/>
</dbReference>
<dbReference type="HAMAP" id="MF_00290">
    <property type="entry name" value="tRNA_dimethyltr_TRM1"/>
    <property type="match status" value="1"/>
</dbReference>
<dbReference type="InterPro" id="IPR029063">
    <property type="entry name" value="SAM-dependent_MTases_sf"/>
</dbReference>
<dbReference type="InterPro" id="IPR002905">
    <property type="entry name" value="Trm1"/>
</dbReference>
<dbReference type="InterPro" id="IPR022923">
    <property type="entry name" value="TRM1_arc_bac"/>
</dbReference>
<dbReference type="InterPro" id="IPR042296">
    <property type="entry name" value="tRNA_met_Trm1_C"/>
</dbReference>
<dbReference type="NCBIfam" id="TIGR00308">
    <property type="entry name" value="TRM1"/>
    <property type="match status" value="1"/>
</dbReference>
<dbReference type="PANTHER" id="PTHR10631">
    <property type="entry name" value="N 2 ,N 2 -DIMETHYLGUANOSINE TRNA METHYLTRANSFERASE"/>
    <property type="match status" value="1"/>
</dbReference>
<dbReference type="PANTHER" id="PTHR10631:SF3">
    <property type="entry name" value="TRNA (GUANINE(26)-N(2))-DIMETHYLTRANSFERASE"/>
    <property type="match status" value="1"/>
</dbReference>
<dbReference type="Pfam" id="PF02005">
    <property type="entry name" value="TRM"/>
    <property type="match status" value="1"/>
</dbReference>
<dbReference type="SUPFAM" id="SSF53335">
    <property type="entry name" value="S-adenosyl-L-methionine-dependent methyltransferases"/>
    <property type="match status" value="1"/>
</dbReference>
<dbReference type="PROSITE" id="PS51626">
    <property type="entry name" value="SAM_MT_TRM1"/>
    <property type="match status" value="1"/>
</dbReference>
<gene>
    <name evidence="1" type="primary">trm1</name>
    <name type="ordered locus">AF_0815</name>
</gene>
<comment type="function">
    <text evidence="1">Dimethylates a single guanine residue at position 26 of a number of tRNAs using S-adenosyl-L-methionine as donor of the methyl groups.</text>
</comment>
<comment type="catalytic activity">
    <reaction evidence="1">
        <text>guanosine(26) in tRNA + 2 S-adenosyl-L-methionine = N(2)-dimethylguanosine(26) in tRNA + 2 S-adenosyl-L-homocysteine + 2 H(+)</text>
        <dbReference type="Rhea" id="RHEA:43140"/>
        <dbReference type="Rhea" id="RHEA-COMP:10359"/>
        <dbReference type="Rhea" id="RHEA-COMP:10360"/>
        <dbReference type="ChEBI" id="CHEBI:15378"/>
        <dbReference type="ChEBI" id="CHEBI:57856"/>
        <dbReference type="ChEBI" id="CHEBI:59789"/>
        <dbReference type="ChEBI" id="CHEBI:74269"/>
        <dbReference type="ChEBI" id="CHEBI:74513"/>
        <dbReference type="EC" id="2.1.1.216"/>
    </reaction>
</comment>
<comment type="similarity">
    <text evidence="1">Belongs to the class I-like SAM-binding methyltransferase superfamily. Trm1 family.</text>
</comment>
<evidence type="ECO:0000255" key="1">
    <source>
        <dbReference type="HAMAP-Rule" id="MF_00290"/>
    </source>
</evidence>
<protein>
    <recommendedName>
        <fullName evidence="1">tRNA (guanine(26)-N(2))-dimethyltransferase</fullName>
        <ecNumber evidence="1">2.1.1.216</ecNumber>
    </recommendedName>
    <alternativeName>
        <fullName evidence="1">tRNA 2,2-dimethylguanosine-26 methyltransferase</fullName>
    </alternativeName>
    <alternativeName>
        <fullName evidence="1">tRNA(guanine-26,N(2)-N(2)) methyltransferase</fullName>
    </alternativeName>
    <alternativeName>
        <fullName evidence="1">tRNA(m(2,2)G26)dimethyltransferase</fullName>
    </alternativeName>
</protein>
<reference key="1">
    <citation type="journal article" date="1997" name="Nature">
        <title>The complete genome sequence of the hyperthermophilic, sulphate-reducing archaeon Archaeoglobus fulgidus.</title>
        <authorList>
            <person name="Klenk H.-P."/>
            <person name="Clayton R.A."/>
            <person name="Tomb J.-F."/>
            <person name="White O."/>
            <person name="Nelson K.E."/>
            <person name="Ketchum K.A."/>
            <person name="Dodson R.J."/>
            <person name="Gwinn M.L."/>
            <person name="Hickey E.K."/>
            <person name="Peterson J.D."/>
            <person name="Richardson D.L."/>
            <person name="Kerlavage A.R."/>
            <person name="Graham D.E."/>
            <person name="Kyrpides N.C."/>
            <person name="Fleischmann R.D."/>
            <person name="Quackenbush J."/>
            <person name="Lee N.H."/>
            <person name="Sutton G.G."/>
            <person name="Gill S.R."/>
            <person name="Kirkness E.F."/>
            <person name="Dougherty B.A."/>
            <person name="McKenney K."/>
            <person name="Adams M.D."/>
            <person name="Loftus B.J."/>
            <person name="Peterson S.N."/>
            <person name="Reich C.I."/>
            <person name="McNeil L.K."/>
            <person name="Badger J.H."/>
            <person name="Glodek A."/>
            <person name="Zhou L."/>
            <person name="Overbeek R."/>
            <person name="Gocayne J.D."/>
            <person name="Weidman J.F."/>
            <person name="McDonald L.A."/>
            <person name="Utterback T.R."/>
            <person name="Cotton M.D."/>
            <person name="Spriggs T."/>
            <person name="Artiach P."/>
            <person name="Kaine B.P."/>
            <person name="Sykes S.M."/>
            <person name="Sadow P.W."/>
            <person name="D'Andrea K.P."/>
            <person name="Bowman C."/>
            <person name="Fujii C."/>
            <person name="Garland S.A."/>
            <person name="Mason T.M."/>
            <person name="Olsen G.J."/>
            <person name="Fraser C.M."/>
            <person name="Smith H.O."/>
            <person name="Woese C.R."/>
            <person name="Venter J.C."/>
        </authorList>
    </citation>
    <scope>NUCLEOTIDE SEQUENCE [LARGE SCALE GENOMIC DNA]</scope>
    <source>
        <strain>ATCC 49558 / DSM 4304 / JCM 9628 / NBRC 100126 / VC-16</strain>
    </source>
</reference>
<proteinExistence type="inferred from homology"/>
<feature type="chain" id="PRO_0000147680" description="tRNA (guanine(26)-N(2))-dimethyltransferase">
    <location>
        <begin position="1"/>
        <end position="349"/>
    </location>
</feature>
<feature type="domain" description="Trm1 methyltransferase" evidence="1">
    <location>
        <begin position="1"/>
        <end position="343"/>
    </location>
</feature>
<feature type="binding site" evidence="1">
    <location>
        <position position="25"/>
    </location>
    <ligand>
        <name>S-adenosyl-L-methionine</name>
        <dbReference type="ChEBI" id="CHEBI:59789"/>
    </ligand>
</feature>
<feature type="binding site" evidence="1">
    <location>
        <position position="50"/>
    </location>
    <ligand>
        <name>S-adenosyl-L-methionine</name>
        <dbReference type="ChEBI" id="CHEBI:59789"/>
    </ligand>
</feature>
<feature type="binding site" evidence="1">
    <location>
        <position position="66"/>
    </location>
    <ligand>
        <name>S-adenosyl-L-methionine</name>
        <dbReference type="ChEBI" id="CHEBI:59789"/>
    </ligand>
</feature>
<feature type="binding site" evidence="1">
    <location>
        <position position="92"/>
    </location>
    <ligand>
        <name>S-adenosyl-L-methionine</name>
        <dbReference type="ChEBI" id="CHEBI:59789"/>
    </ligand>
</feature>
<feature type="binding site" evidence="1">
    <location>
        <position position="93"/>
    </location>
    <ligand>
        <name>S-adenosyl-L-methionine</name>
        <dbReference type="ChEBI" id="CHEBI:59789"/>
    </ligand>
</feature>
<sequence length="349" mass="38808">MEVEEGRARVKVEGVFYNPRMRFCRDLDMLVFATMDSKEYFDALSASGIRGIRAALEAGKKAVFNDVSPKAVKVIEENLRENGVSGEVINGDAAAVMRQRAFEHIDIDPFGSPAPFMDSACFSAKRYLSVTATDTAALCGSATNSGLKKYGAFAVKTDVYHEVGLRMLIGFVVREATKYEKALFPLISWVREHYYRVHFKIKKSTAMSAKVYEKMGYLAYCSTCLRKKVLGMGEGAERCECGGKFSLIGPIWLGELKQRDFAEKVAEKAEGKLRAFLEKILAEIDAPTAYSLPALAKIHSLTLPPTDVVVEELKKLGYEASRTHYCGFCVKTDADRDVVVKILRSRKII</sequence>